<comment type="function">
    <text evidence="1">Function in general translation initiation by promoting the binding of the formylmethionine-tRNA to ribosomes. Seems to function along with eIF-2 (By similarity).</text>
</comment>
<comment type="PTM">
    <text evidence="3">This protein undergoes a protein self splicing that involves a post-translational excision of the intervening region (intein) followed by peptide ligation.</text>
</comment>
<comment type="miscellaneous">
    <text>The intein interrupts the GTP-binding site.</text>
</comment>
<comment type="similarity">
    <text evidence="3">Belongs to the TRAFAC class translation factor GTPase superfamily. Classic translation factor GTPase family. IF-2 subfamily.</text>
</comment>
<gene>
    <name type="primary">infB</name>
    <name type="ordered locus">TK1305</name>
</gene>
<name>IF2P_THEKO</name>
<reference key="1">
    <citation type="journal article" date="2005" name="Genome Res.">
        <title>Complete genome sequence of the hyperthermophilic archaeon Thermococcus kodakaraensis KOD1 and comparison with Pyrococcus genomes.</title>
        <authorList>
            <person name="Fukui T."/>
            <person name="Atomi H."/>
            <person name="Kanai T."/>
            <person name="Matsumi R."/>
            <person name="Fujiwara S."/>
            <person name="Imanaka T."/>
        </authorList>
    </citation>
    <scope>NUCLEOTIDE SEQUENCE [LARGE SCALE GENOMIC DNA]</scope>
    <source>
        <strain>ATCC BAA-918 / JCM 12380 / KOD1</strain>
    </source>
</reference>
<accession>Q5JGR9</accession>
<organism>
    <name type="scientific">Thermococcus kodakarensis (strain ATCC BAA-918 / JCM 12380 / KOD1)</name>
    <name type="common">Pyrococcus kodakaraensis (strain KOD1)</name>
    <dbReference type="NCBI Taxonomy" id="69014"/>
    <lineage>
        <taxon>Archaea</taxon>
        <taxon>Methanobacteriati</taxon>
        <taxon>Methanobacteriota</taxon>
        <taxon>Thermococci</taxon>
        <taxon>Thermococcales</taxon>
        <taxon>Thermococcaceae</taxon>
        <taxon>Thermococcus</taxon>
    </lineage>
</organism>
<evidence type="ECO:0000250" key="1"/>
<evidence type="ECO:0000255" key="2"/>
<evidence type="ECO:0000305" key="3"/>
<proteinExistence type="inferred from homology"/>
<dbReference type="EMBL" id="AP006878">
    <property type="protein sequence ID" value="BAD85494.1"/>
    <property type="molecule type" value="Genomic_DNA"/>
</dbReference>
<dbReference type="RefSeq" id="WP_011250256.1">
    <property type="nucleotide sequence ID" value="NC_006624.1"/>
</dbReference>
<dbReference type="SMR" id="Q5JGR9"/>
<dbReference type="IntAct" id="Q5JGR9">
    <property type="interactions" value="1"/>
</dbReference>
<dbReference type="MINT" id="Q5JGR9"/>
<dbReference type="STRING" id="69014.TK1305"/>
<dbReference type="EnsemblBacteria" id="BAD85494">
    <property type="protein sequence ID" value="BAD85494"/>
    <property type="gene ID" value="TK1305"/>
</dbReference>
<dbReference type="GeneID" id="78447825"/>
<dbReference type="KEGG" id="tko:TK1305"/>
<dbReference type="PATRIC" id="fig|69014.16.peg.1277"/>
<dbReference type="eggNOG" id="arCOG01560">
    <property type="taxonomic scope" value="Archaea"/>
</dbReference>
<dbReference type="eggNOG" id="arCOG03151">
    <property type="taxonomic scope" value="Archaea"/>
</dbReference>
<dbReference type="eggNOG" id="arCOG03158">
    <property type="taxonomic scope" value="Archaea"/>
</dbReference>
<dbReference type="HOGENOM" id="CLU_002656_3_4_2"/>
<dbReference type="InParanoid" id="Q5JGR9"/>
<dbReference type="OrthoDB" id="30957at2157"/>
<dbReference type="PhylomeDB" id="Q5JGR9"/>
<dbReference type="Proteomes" id="UP000000536">
    <property type="component" value="Chromosome"/>
</dbReference>
<dbReference type="GO" id="GO:0005737">
    <property type="term" value="C:cytoplasm"/>
    <property type="evidence" value="ECO:0000318"/>
    <property type="project" value="GO_Central"/>
</dbReference>
<dbReference type="GO" id="GO:0004519">
    <property type="term" value="F:endonuclease activity"/>
    <property type="evidence" value="ECO:0007669"/>
    <property type="project" value="UniProtKB-KW"/>
</dbReference>
<dbReference type="GO" id="GO:0005525">
    <property type="term" value="F:GTP binding"/>
    <property type="evidence" value="ECO:0007669"/>
    <property type="project" value="UniProtKB-KW"/>
</dbReference>
<dbReference type="GO" id="GO:0003924">
    <property type="term" value="F:GTPase activity"/>
    <property type="evidence" value="ECO:0007669"/>
    <property type="project" value="UniProtKB-UniRule"/>
</dbReference>
<dbReference type="GO" id="GO:0003743">
    <property type="term" value="F:translation initiation factor activity"/>
    <property type="evidence" value="ECO:0000318"/>
    <property type="project" value="GO_Central"/>
</dbReference>
<dbReference type="GO" id="GO:0016539">
    <property type="term" value="P:intein-mediated protein splicing"/>
    <property type="evidence" value="ECO:0007669"/>
    <property type="project" value="InterPro"/>
</dbReference>
<dbReference type="GO" id="GO:0006314">
    <property type="term" value="P:intron homing"/>
    <property type="evidence" value="ECO:0007669"/>
    <property type="project" value="UniProtKB-KW"/>
</dbReference>
<dbReference type="GO" id="GO:0006413">
    <property type="term" value="P:translational initiation"/>
    <property type="evidence" value="ECO:0000318"/>
    <property type="project" value="GO_Central"/>
</dbReference>
<dbReference type="CDD" id="cd03703">
    <property type="entry name" value="aeIF5B_II"/>
    <property type="match status" value="1"/>
</dbReference>
<dbReference type="CDD" id="cd00081">
    <property type="entry name" value="Hint"/>
    <property type="match status" value="2"/>
</dbReference>
<dbReference type="CDD" id="cd16266">
    <property type="entry name" value="IF2_aeIF5B_IV"/>
    <property type="match status" value="1"/>
</dbReference>
<dbReference type="CDD" id="cd01887">
    <property type="entry name" value="IF2_eIF5B"/>
    <property type="match status" value="1"/>
</dbReference>
<dbReference type="FunFam" id="3.40.50.300:FF:000112">
    <property type="entry name" value="Eukaryotic translation initiation factor 5B"/>
    <property type="match status" value="1"/>
</dbReference>
<dbReference type="FunFam" id="2.40.30.10:FF:000013">
    <property type="entry name" value="eukaryotic translation initiation factor 5B"/>
    <property type="match status" value="1"/>
</dbReference>
<dbReference type="FunFam" id="2.170.16.10:FF:000020">
    <property type="entry name" value="Probable translation initiation factor IF-2"/>
    <property type="match status" value="1"/>
</dbReference>
<dbReference type="FunFam" id="3.40.50.10050:FF:000009">
    <property type="entry name" value="Probable translation initiation factor IF-2"/>
    <property type="match status" value="1"/>
</dbReference>
<dbReference type="Gene3D" id="2.170.16.10">
    <property type="entry name" value="Hedgehog/Intein (Hint) domain"/>
    <property type="match status" value="2"/>
</dbReference>
<dbReference type="Gene3D" id="3.10.28.10">
    <property type="entry name" value="Homing endonucleases"/>
    <property type="match status" value="1"/>
</dbReference>
<dbReference type="Gene3D" id="3.40.50.300">
    <property type="entry name" value="P-loop containing nucleotide triphosphate hydrolases"/>
    <property type="match status" value="1"/>
</dbReference>
<dbReference type="Gene3D" id="2.40.30.10">
    <property type="entry name" value="Translation factors"/>
    <property type="match status" value="2"/>
</dbReference>
<dbReference type="Gene3D" id="3.40.50.10050">
    <property type="entry name" value="Translation initiation factor IF- 2, domain 3"/>
    <property type="match status" value="1"/>
</dbReference>
<dbReference type="HAMAP" id="MF_00100_A">
    <property type="entry name" value="IF_2_A"/>
    <property type="match status" value="1"/>
</dbReference>
<dbReference type="InterPro" id="IPR004161">
    <property type="entry name" value="EFTu-like_2"/>
</dbReference>
<dbReference type="InterPro" id="IPR029459">
    <property type="entry name" value="EFTU-type"/>
</dbReference>
<dbReference type="InterPro" id="IPR003586">
    <property type="entry name" value="Hint_dom_C"/>
</dbReference>
<dbReference type="InterPro" id="IPR003587">
    <property type="entry name" value="Hint_dom_N"/>
</dbReference>
<dbReference type="InterPro" id="IPR036844">
    <property type="entry name" value="Hint_dom_sf"/>
</dbReference>
<dbReference type="InterPro" id="IPR027434">
    <property type="entry name" value="Homing_endonucl"/>
</dbReference>
<dbReference type="InterPro" id="IPR006142">
    <property type="entry name" value="INTEIN"/>
</dbReference>
<dbReference type="InterPro" id="IPR030934">
    <property type="entry name" value="Intein_C"/>
</dbReference>
<dbReference type="InterPro" id="IPR004042">
    <property type="entry name" value="Intein_endonuc_central"/>
</dbReference>
<dbReference type="InterPro" id="IPR006141">
    <property type="entry name" value="Intein_N"/>
</dbReference>
<dbReference type="InterPro" id="IPR004860">
    <property type="entry name" value="LAGLIDADG_dom"/>
</dbReference>
<dbReference type="InterPro" id="IPR027417">
    <property type="entry name" value="P-loop_NTPase"/>
</dbReference>
<dbReference type="InterPro" id="IPR005225">
    <property type="entry name" value="Small_GTP-bd"/>
</dbReference>
<dbReference type="InterPro" id="IPR000795">
    <property type="entry name" value="T_Tr_GTP-bd_dom"/>
</dbReference>
<dbReference type="InterPro" id="IPR004544">
    <property type="entry name" value="TF_aIF-2_arc"/>
</dbReference>
<dbReference type="InterPro" id="IPR015760">
    <property type="entry name" value="TIF_IF2"/>
</dbReference>
<dbReference type="InterPro" id="IPR023115">
    <property type="entry name" value="TIF_IF2_dom3"/>
</dbReference>
<dbReference type="InterPro" id="IPR036925">
    <property type="entry name" value="TIF_IF2_dom3_sf"/>
</dbReference>
<dbReference type="InterPro" id="IPR009000">
    <property type="entry name" value="Transl_B-barrel_sf"/>
</dbReference>
<dbReference type="NCBIfam" id="TIGR00491">
    <property type="entry name" value="aIF-2"/>
    <property type="match status" value="1"/>
</dbReference>
<dbReference type="NCBIfam" id="TIGR01443">
    <property type="entry name" value="intein_Cterm"/>
    <property type="match status" value="1"/>
</dbReference>
<dbReference type="NCBIfam" id="TIGR01445">
    <property type="entry name" value="intein_Nterm"/>
    <property type="match status" value="1"/>
</dbReference>
<dbReference type="NCBIfam" id="NF003078">
    <property type="entry name" value="PRK04004.1"/>
    <property type="match status" value="1"/>
</dbReference>
<dbReference type="NCBIfam" id="NF011418">
    <property type="entry name" value="PRK14845.1"/>
    <property type="match status" value="1"/>
</dbReference>
<dbReference type="NCBIfam" id="TIGR00231">
    <property type="entry name" value="small_GTP"/>
    <property type="match status" value="1"/>
</dbReference>
<dbReference type="PANTHER" id="PTHR43381:SF4">
    <property type="entry name" value="EUKARYOTIC TRANSLATION INITIATION FACTOR 5B"/>
    <property type="match status" value="1"/>
</dbReference>
<dbReference type="PANTHER" id="PTHR43381">
    <property type="entry name" value="TRANSLATION INITIATION FACTOR IF-2-RELATED"/>
    <property type="match status" value="1"/>
</dbReference>
<dbReference type="Pfam" id="PF00009">
    <property type="entry name" value="GTP_EFTU"/>
    <property type="match status" value="1"/>
</dbReference>
<dbReference type="Pfam" id="PF03144">
    <property type="entry name" value="GTP_EFTU_D2"/>
    <property type="match status" value="1"/>
</dbReference>
<dbReference type="Pfam" id="PF14578">
    <property type="entry name" value="GTP_EFTU_D4"/>
    <property type="match status" value="1"/>
</dbReference>
<dbReference type="Pfam" id="PF11987">
    <property type="entry name" value="IF-2"/>
    <property type="match status" value="1"/>
</dbReference>
<dbReference type="Pfam" id="PF14890">
    <property type="entry name" value="Intein_splicing"/>
    <property type="match status" value="1"/>
</dbReference>
<dbReference type="Pfam" id="PF14528">
    <property type="entry name" value="LAGLIDADG_3"/>
    <property type="match status" value="1"/>
</dbReference>
<dbReference type="PRINTS" id="PR00379">
    <property type="entry name" value="INTEIN"/>
</dbReference>
<dbReference type="SMART" id="SM00305">
    <property type="entry name" value="HintC"/>
    <property type="match status" value="1"/>
</dbReference>
<dbReference type="SMART" id="SM00306">
    <property type="entry name" value="HintN"/>
    <property type="match status" value="1"/>
</dbReference>
<dbReference type="SUPFAM" id="SSF51294">
    <property type="entry name" value="Hedgehog/intein (Hint) domain"/>
    <property type="match status" value="1"/>
</dbReference>
<dbReference type="SUPFAM" id="SSF55608">
    <property type="entry name" value="Homing endonucleases"/>
    <property type="match status" value="1"/>
</dbReference>
<dbReference type="SUPFAM" id="SSF52156">
    <property type="entry name" value="Initiation factor IF2/eIF5b, domain 3"/>
    <property type="match status" value="1"/>
</dbReference>
<dbReference type="SUPFAM" id="SSF52540">
    <property type="entry name" value="P-loop containing nucleoside triphosphate hydrolases"/>
    <property type="match status" value="1"/>
</dbReference>
<dbReference type="SUPFAM" id="SSF50447">
    <property type="entry name" value="Translation proteins"/>
    <property type="match status" value="1"/>
</dbReference>
<dbReference type="PROSITE" id="PS51722">
    <property type="entry name" value="G_TR_2"/>
    <property type="match status" value="1"/>
</dbReference>
<dbReference type="PROSITE" id="PS50818">
    <property type="entry name" value="INTEIN_C_TER"/>
    <property type="match status" value="1"/>
</dbReference>
<dbReference type="PROSITE" id="PS50819">
    <property type="entry name" value="INTEIN_ENDONUCLEASE"/>
    <property type="match status" value="1"/>
</dbReference>
<dbReference type="PROSITE" id="PS50817">
    <property type="entry name" value="INTEIN_N_TER"/>
    <property type="match status" value="1"/>
</dbReference>
<sequence length="1144" mass="129904">MTKRIRQPIIAVLGHVDHGKCLLPDEKVILPEHGPITLKGLFDLAKETVVADNEKEIRKLGAKLTIVGEDGRLRVLESPYVWKVRHRGKMLRVKLKNWHSVSVTPEHPFLTTRGWVRADQLKPGDYVAVPRVIHGNESDERFVSFVYEKLKNDELIAKLRGEVLSKISSEFKGDRAYKVERNVFRWEDIERLNLWDEVERVAFTPRMHRSGKPLHYVKLPRSPEEWEAFFYFAGVMFGDGSQDKIANNDVEVYEELKKLSVLGVAVKRVERTTSYEIELTNGKNALLRLLRVLFEYPERQKAKSIRVPRILFIAPRKYVSRFLRGYFDADGHVSLKDARIEVTSASQEFLEDLSLLLLRFGIVSKIYRSDYTTLVISGRRNLDLFRRYIGFSVKNKAEALEKAIKKSRRSESYPIFEELKRLRLLFGFTRTELNSNVPFYGKYESEEAPSYETLMRILDAIEKGSINLDKKIAVLEGRIRDHNYIKAFEKDGLIKDGKLTELGRELLEVWRNREFDSSDVDYIRNLAENLVFIPVEDIEEFEYEGYVYDVTTETHNFVANGILVHNTTLLDRIRHTNVAGKEAGGITQHIGATEVPIDVVKQLAGPLIKLWKGEIKLPGLLFIDTPGHEAFTSLRARGGSLADLAVLVVDINEGFQPQTIESIEILRRYRTPFIVAANKIDRIKGWVIEEDEPFLVNIKKQDQRAIQELETKLWELIGKFYEMGFNANRFDRVQDFTRELAIVPISAKYGIGIPELLVLIAGLSQKYLEEKLKIEVEGPARGTILEVREEVGLGTTIDVIIYDGTLRKDDTIVVGGKDKAIVTKIRALLKPKPLDEIRDPRFRFDQVDEVTAAAGVKIAAPGLEEALAGSPVIAARSEEEIEKAKQEILSQIQSVVINTGKIGVIVKADTLGSLEALSKELQEKGIPIRKADVGNISKTDVMEALSVKEEEPKYGVVLGFNVKVNEDAEEVANAKGVPIFVGNIIYKLIEDYEAWVKEEEEKRKRELLKNVTFPGVIRLYPDERYVFRRSKPAIVGVEVLEGRIRPGVTLIKETGEKVGVIKSIKNKNDFVQEAKKGDAVAIAIEGAIVGRHIHPGETLYVDLSKNDVIILAKQLKDELEETDIKALKMTAKVKAKEDPFWRAV</sequence>
<keyword id="KW-0068">Autocatalytic cleavage</keyword>
<keyword id="KW-0255">Endonuclease</keyword>
<keyword id="KW-0342">GTP-binding</keyword>
<keyword id="KW-0378">Hydrolase</keyword>
<keyword id="KW-0396">Initiation factor</keyword>
<keyword id="KW-0404">Intron homing</keyword>
<keyword id="KW-0540">Nuclease</keyword>
<keyword id="KW-0547">Nucleotide-binding</keyword>
<keyword id="KW-0648">Protein biosynthesis</keyword>
<keyword id="KW-0651">Protein splicing</keyword>
<keyword id="KW-1185">Reference proteome</keyword>
<feature type="chain" id="PRO_0000014496" description="Probable translation initiation factor IF-2, 1st part" evidence="2">
    <location>
        <begin position="1"/>
        <end position="20"/>
    </location>
</feature>
<feature type="chain" id="PRO_0000014497" description="Pko infB intein" evidence="2">
    <location>
        <begin position="21"/>
        <end position="566"/>
    </location>
</feature>
<feature type="chain" id="PRO_0000014498" description="Probable translation initiation factor IF-2, 2nd part" evidence="2">
    <location>
        <begin position="567"/>
        <end position="1144"/>
    </location>
</feature>
<feature type="domain" description="DOD-type homing endonuclease">
    <location>
        <begin position="232"/>
        <end position="362"/>
    </location>
</feature>
<feature type="domain" description="tr-type G">
    <location>
        <begin position="551"/>
        <end position="768"/>
    </location>
</feature>
<feature type="binding site" evidence="1">
    <location>
        <begin position="624"/>
        <end position="628"/>
    </location>
    <ligand>
        <name>GTP</name>
        <dbReference type="ChEBI" id="CHEBI:37565"/>
    </ligand>
</feature>
<feature type="binding site" evidence="1">
    <location>
        <begin position="678"/>
        <end position="681"/>
    </location>
    <ligand>
        <name>GTP</name>
        <dbReference type="ChEBI" id="CHEBI:37565"/>
    </ligand>
</feature>
<protein>
    <recommendedName>
        <fullName>Probable translation initiation factor IF-2</fullName>
    </recommendedName>
    <component>
        <recommendedName>
            <fullName>Pko infB intein</fullName>
        </recommendedName>
        <alternativeName>
            <fullName>Pko IF2 intein</fullName>
        </alternativeName>
    </component>
</protein>